<dbReference type="EMBL" id="AE009439">
    <property type="protein sequence ID" value="AAM01425.1"/>
    <property type="molecule type" value="Genomic_DNA"/>
</dbReference>
<dbReference type="RefSeq" id="WP_011018580.1">
    <property type="nucleotide sequence ID" value="NC_003551.1"/>
</dbReference>
<dbReference type="STRING" id="190192.MK0208"/>
<dbReference type="PaxDb" id="190192-MK0208"/>
<dbReference type="EnsemblBacteria" id="AAM01425">
    <property type="protein sequence ID" value="AAM01425"/>
    <property type="gene ID" value="MK0208"/>
</dbReference>
<dbReference type="GeneID" id="43496546"/>
<dbReference type="KEGG" id="mka:MK0208"/>
<dbReference type="HOGENOM" id="CLU_2985689_0_0_2"/>
<dbReference type="InParanoid" id="Q8TYT4"/>
<dbReference type="OrthoDB" id="43651at2157"/>
<dbReference type="Proteomes" id="UP000001826">
    <property type="component" value="Chromosome"/>
</dbReference>
<dbReference type="GO" id="GO:0005886">
    <property type="term" value="C:plasma membrane"/>
    <property type="evidence" value="ECO:0007669"/>
    <property type="project" value="UniProtKB-SubCell"/>
</dbReference>
<dbReference type="GO" id="GO:0015031">
    <property type="term" value="P:protein transport"/>
    <property type="evidence" value="ECO:0007669"/>
    <property type="project" value="UniProtKB-UniRule"/>
</dbReference>
<dbReference type="HAMAP" id="MF_00751">
    <property type="entry name" value="SecG"/>
    <property type="match status" value="1"/>
</dbReference>
<dbReference type="InterPro" id="IPR023531">
    <property type="entry name" value="Preprot_translocase_SecG"/>
</dbReference>
<dbReference type="InterPro" id="IPR016482">
    <property type="entry name" value="SecG/Sec61-beta/Sbh"/>
</dbReference>
<dbReference type="Pfam" id="PF03911">
    <property type="entry name" value="Sec61_beta"/>
    <property type="match status" value="1"/>
</dbReference>
<accession>Q8TYT4</accession>
<protein>
    <recommendedName>
        <fullName>Preprotein translocase subunit SecG</fullName>
    </recommendedName>
    <alternativeName>
        <fullName>Protein transport protein Sec61 subunit beta homolog</fullName>
    </alternativeName>
</protein>
<name>SECG_METKA</name>
<evidence type="ECO:0000250" key="1"/>
<evidence type="ECO:0000305" key="2"/>
<comment type="function">
    <text evidence="1">Involved in protein export. The function of the beta subunit is unknown, but it may be involved in stabilization of the trimeric complex (By similarity).</text>
</comment>
<comment type="subunit">
    <text evidence="1">Component of the protein translocase complex. Heterotrimer consisting of alpha (SecY), beta (SecG) and gamma (SecE) subunits. Can form oligomers of the heterotrimer (By similarity).</text>
</comment>
<comment type="subcellular location">
    <subcellularLocation>
        <location evidence="1">Cell membrane</location>
        <topology evidence="1">Single-pass membrane protein</topology>
    </subcellularLocation>
</comment>
<comment type="similarity">
    <text evidence="2">Belongs to the SEC61-beta family.</text>
</comment>
<sequence length="57" mass="6293">MGKKMEKKRAEMPPARAGILSFWDEEAPGIKIDPDYILYACFAVAVLLIIAHTMAAV</sequence>
<reference key="1">
    <citation type="journal article" date="2002" name="Proc. Natl. Acad. Sci. U.S.A.">
        <title>The complete genome of hyperthermophile Methanopyrus kandleri AV19 and monophyly of archaeal methanogens.</title>
        <authorList>
            <person name="Slesarev A.I."/>
            <person name="Mezhevaya K.V."/>
            <person name="Makarova K.S."/>
            <person name="Polushin N.N."/>
            <person name="Shcherbinina O.V."/>
            <person name="Shakhova V.V."/>
            <person name="Belova G.I."/>
            <person name="Aravind L."/>
            <person name="Natale D.A."/>
            <person name="Rogozin I.B."/>
            <person name="Tatusov R.L."/>
            <person name="Wolf Y.I."/>
            <person name="Stetter K.O."/>
            <person name="Malykh A.G."/>
            <person name="Koonin E.V."/>
            <person name="Kozyavkin S.A."/>
        </authorList>
    </citation>
    <scope>NUCLEOTIDE SEQUENCE [LARGE SCALE GENOMIC DNA]</scope>
    <source>
        <strain>AV19 / DSM 6324 / JCM 9639 / NBRC 100938</strain>
    </source>
</reference>
<keyword id="KW-1003">Cell membrane</keyword>
<keyword id="KW-0472">Membrane</keyword>
<keyword id="KW-0653">Protein transport</keyword>
<keyword id="KW-1185">Reference proteome</keyword>
<keyword id="KW-0811">Translocation</keyword>
<keyword id="KW-0812">Transmembrane</keyword>
<keyword id="KW-1133">Transmembrane helix</keyword>
<keyword id="KW-0813">Transport</keyword>
<organism>
    <name type="scientific">Methanopyrus kandleri (strain AV19 / DSM 6324 / JCM 9639 / NBRC 100938)</name>
    <dbReference type="NCBI Taxonomy" id="190192"/>
    <lineage>
        <taxon>Archaea</taxon>
        <taxon>Methanobacteriati</taxon>
        <taxon>Methanobacteriota</taxon>
        <taxon>Methanomada group</taxon>
        <taxon>Methanopyri</taxon>
        <taxon>Methanopyrales</taxon>
        <taxon>Methanopyraceae</taxon>
        <taxon>Methanopyrus</taxon>
    </lineage>
</organism>
<proteinExistence type="inferred from homology"/>
<gene>
    <name type="primary">secG</name>
    <name type="ordered locus">MK0208</name>
</gene>
<feature type="chain" id="PRO_0000157269" description="Preprotein translocase subunit SecG">
    <location>
        <begin position="1"/>
        <end position="57"/>
    </location>
</feature>
<feature type="topological domain" description="Cytoplasmic" evidence="1">
    <location>
        <begin position="1"/>
        <end position="33"/>
    </location>
</feature>
<feature type="transmembrane region" description="Helical" evidence="1">
    <location>
        <begin position="34"/>
        <end position="53"/>
    </location>
</feature>
<feature type="topological domain" description="Extracellular" evidence="1">
    <location>
        <begin position="54"/>
        <end position="57"/>
    </location>
</feature>